<name>NUSB_HAHCH</name>
<dbReference type="EMBL" id="CP000155">
    <property type="protein sequence ID" value="ABC32604.1"/>
    <property type="molecule type" value="Genomic_DNA"/>
</dbReference>
<dbReference type="RefSeq" id="WP_011399662.1">
    <property type="nucleotide sequence ID" value="NC_007645.1"/>
</dbReference>
<dbReference type="SMR" id="Q2S9S0"/>
<dbReference type="STRING" id="349521.HCH_05953"/>
<dbReference type="KEGG" id="hch:HCH_05953"/>
<dbReference type="eggNOG" id="COG0781">
    <property type="taxonomic scope" value="Bacteria"/>
</dbReference>
<dbReference type="HOGENOM" id="CLU_087843_4_1_6"/>
<dbReference type="OrthoDB" id="9789556at2"/>
<dbReference type="Proteomes" id="UP000000238">
    <property type="component" value="Chromosome"/>
</dbReference>
<dbReference type="GO" id="GO:0005829">
    <property type="term" value="C:cytosol"/>
    <property type="evidence" value="ECO:0007669"/>
    <property type="project" value="TreeGrafter"/>
</dbReference>
<dbReference type="GO" id="GO:0003723">
    <property type="term" value="F:RNA binding"/>
    <property type="evidence" value="ECO:0007669"/>
    <property type="project" value="UniProtKB-UniRule"/>
</dbReference>
<dbReference type="GO" id="GO:0006353">
    <property type="term" value="P:DNA-templated transcription termination"/>
    <property type="evidence" value="ECO:0007669"/>
    <property type="project" value="UniProtKB-UniRule"/>
</dbReference>
<dbReference type="GO" id="GO:0031564">
    <property type="term" value="P:transcription antitermination"/>
    <property type="evidence" value="ECO:0007669"/>
    <property type="project" value="UniProtKB-KW"/>
</dbReference>
<dbReference type="Gene3D" id="1.10.940.10">
    <property type="entry name" value="NusB-like"/>
    <property type="match status" value="1"/>
</dbReference>
<dbReference type="HAMAP" id="MF_00073">
    <property type="entry name" value="NusB"/>
    <property type="match status" value="1"/>
</dbReference>
<dbReference type="InterPro" id="IPR035926">
    <property type="entry name" value="NusB-like_sf"/>
</dbReference>
<dbReference type="InterPro" id="IPR011605">
    <property type="entry name" value="NusB_fam"/>
</dbReference>
<dbReference type="InterPro" id="IPR006027">
    <property type="entry name" value="NusB_RsmB_TIM44"/>
</dbReference>
<dbReference type="NCBIfam" id="TIGR01951">
    <property type="entry name" value="nusB"/>
    <property type="match status" value="1"/>
</dbReference>
<dbReference type="PANTHER" id="PTHR11078:SF3">
    <property type="entry name" value="ANTITERMINATION NUSB DOMAIN-CONTAINING PROTEIN"/>
    <property type="match status" value="1"/>
</dbReference>
<dbReference type="PANTHER" id="PTHR11078">
    <property type="entry name" value="N UTILIZATION SUBSTANCE PROTEIN B-RELATED"/>
    <property type="match status" value="1"/>
</dbReference>
<dbReference type="Pfam" id="PF01029">
    <property type="entry name" value="NusB"/>
    <property type="match status" value="1"/>
</dbReference>
<dbReference type="SUPFAM" id="SSF48013">
    <property type="entry name" value="NusB-like"/>
    <property type="match status" value="1"/>
</dbReference>
<organism>
    <name type="scientific">Hahella chejuensis (strain KCTC 2396)</name>
    <dbReference type="NCBI Taxonomy" id="349521"/>
    <lineage>
        <taxon>Bacteria</taxon>
        <taxon>Pseudomonadati</taxon>
        <taxon>Pseudomonadota</taxon>
        <taxon>Gammaproteobacteria</taxon>
        <taxon>Oceanospirillales</taxon>
        <taxon>Hahellaceae</taxon>
        <taxon>Hahella</taxon>
    </lineage>
</organism>
<accession>Q2S9S0</accession>
<proteinExistence type="inferred from homology"/>
<feature type="chain" id="PRO_0000265530" description="Transcription antitermination protein NusB">
    <location>
        <begin position="1"/>
        <end position="149"/>
    </location>
</feature>
<sequence length="149" mass="16628">MSKAMEKRRAARKLALQALYQWRVAGASISQIEAEFAVDNDLQQVDRDLFKAVLYGVPSSVSELDALLQPFVDRKLTDVDPVELSLIRMGAFELRSRIEVPYRVVINEAVELAKQFGGTDGHKFVNSVLDKLAPQLRQAEVAAAKSKKK</sequence>
<protein>
    <recommendedName>
        <fullName evidence="1">Transcription antitermination protein NusB</fullName>
    </recommendedName>
    <alternativeName>
        <fullName evidence="1">Antitermination factor NusB</fullName>
    </alternativeName>
</protein>
<comment type="function">
    <text evidence="1">Involved in transcription antitermination. Required for transcription of ribosomal RNA (rRNA) genes. Binds specifically to the boxA antiterminator sequence of the ribosomal RNA (rrn) operons.</text>
</comment>
<comment type="similarity">
    <text evidence="1">Belongs to the NusB family.</text>
</comment>
<evidence type="ECO:0000255" key="1">
    <source>
        <dbReference type="HAMAP-Rule" id="MF_00073"/>
    </source>
</evidence>
<reference key="1">
    <citation type="journal article" date="2005" name="Nucleic Acids Res.">
        <title>Genomic blueprint of Hahella chejuensis, a marine microbe producing an algicidal agent.</title>
        <authorList>
            <person name="Jeong H."/>
            <person name="Yim J.H."/>
            <person name="Lee C."/>
            <person name="Choi S.-H."/>
            <person name="Park Y.K."/>
            <person name="Yoon S.H."/>
            <person name="Hur C.-G."/>
            <person name="Kang H.-Y."/>
            <person name="Kim D."/>
            <person name="Lee H.H."/>
            <person name="Park K.H."/>
            <person name="Park S.-H."/>
            <person name="Park H.-S."/>
            <person name="Lee H.K."/>
            <person name="Oh T.K."/>
            <person name="Kim J.F."/>
        </authorList>
    </citation>
    <scope>NUCLEOTIDE SEQUENCE [LARGE SCALE GENOMIC DNA]</scope>
    <source>
        <strain>KCTC 2396</strain>
    </source>
</reference>
<gene>
    <name evidence="1" type="primary">nusB</name>
    <name type="ordered locus">HCH_05953</name>
</gene>
<keyword id="KW-1185">Reference proteome</keyword>
<keyword id="KW-0694">RNA-binding</keyword>
<keyword id="KW-0804">Transcription</keyword>
<keyword id="KW-0889">Transcription antitermination</keyword>
<keyword id="KW-0805">Transcription regulation</keyword>